<gene>
    <name type="primary">efp</name>
    <name type="ordered locus">TP_0525</name>
</gene>
<dbReference type="EMBL" id="AE000520">
    <property type="protein sequence ID" value="AAC65512.1"/>
    <property type="molecule type" value="Genomic_DNA"/>
</dbReference>
<dbReference type="PIR" id="G71312">
    <property type="entry name" value="G71312"/>
</dbReference>
<dbReference type="RefSeq" id="WP_010881973.1">
    <property type="nucleotide sequence ID" value="NC_021490.2"/>
</dbReference>
<dbReference type="SMR" id="O83537"/>
<dbReference type="IntAct" id="O83537">
    <property type="interactions" value="1"/>
</dbReference>
<dbReference type="STRING" id="243276.TP_0525"/>
<dbReference type="EnsemblBacteria" id="AAC65512">
    <property type="protein sequence ID" value="AAC65512"/>
    <property type="gene ID" value="TP_0525"/>
</dbReference>
<dbReference type="GeneID" id="93876294"/>
<dbReference type="KEGG" id="tpa:TP_0525"/>
<dbReference type="KEGG" id="tpw:TPANIC_0525"/>
<dbReference type="eggNOG" id="COG0231">
    <property type="taxonomic scope" value="Bacteria"/>
</dbReference>
<dbReference type="HOGENOM" id="CLU_074944_0_2_12"/>
<dbReference type="OrthoDB" id="9801844at2"/>
<dbReference type="UniPathway" id="UPA00345"/>
<dbReference type="Proteomes" id="UP000000811">
    <property type="component" value="Chromosome"/>
</dbReference>
<dbReference type="GO" id="GO:0005737">
    <property type="term" value="C:cytoplasm"/>
    <property type="evidence" value="ECO:0007669"/>
    <property type="project" value="UniProtKB-SubCell"/>
</dbReference>
<dbReference type="GO" id="GO:0003746">
    <property type="term" value="F:translation elongation factor activity"/>
    <property type="evidence" value="ECO:0007669"/>
    <property type="project" value="UniProtKB-UniRule"/>
</dbReference>
<dbReference type="GO" id="GO:0043043">
    <property type="term" value="P:peptide biosynthetic process"/>
    <property type="evidence" value="ECO:0007669"/>
    <property type="project" value="InterPro"/>
</dbReference>
<dbReference type="CDD" id="cd04470">
    <property type="entry name" value="S1_EF-P_repeat_1"/>
    <property type="match status" value="1"/>
</dbReference>
<dbReference type="CDD" id="cd05794">
    <property type="entry name" value="S1_EF-P_repeat_2"/>
    <property type="match status" value="1"/>
</dbReference>
<dbReference type="FunFam" id="2.30.30.30:FF:000003">
    <property type="entry name" value="Elongation factor P"/>
    <property type="match status" value="1"/>
</dbReference>
<dbReference type="FunFam" id="2.40.50.140:FF:000004">
    <property type="entry name" value="Elongation factor P"/>
    <property type="match status" value="1"/>
</dbReference>
<dbReference type="FunFam" id="2.40.50.140:FF:000009">
    <property type="entry name" value="Elongation factor P"/>
    <property type="match status" value="1"/>
</dbReference>
<dbReference type="Gene3D" id="2.30.30.30">
    <property type="match status" value="1"/>
</dbReference>
<dbReference type="Gene3D" id="2.40.50.140">
    <property type="entry name" value="Nucleic acid-binding proteins"/>
    <property type="match status" value="2"/>
</dbReference>
<dbReference type="HAMAP" id="MF_00141">
    <property type="entry name" value="EF_P"/>
    <property type="match status" value="1"/>
</dbReference>
<dbReference type="InterPro" id="IPR015365">
    <property type="entry name" value="Elong-fact-P_C"/>
</dbReference>
<dbReference type="InterPro" id="IPR012340">
    <property type="entry name" value="NA-bd_OB-fold"/>
</dbReference>
<dbReference type="InterPro" id="IPR014722">
    <property type="entry name" value="Rib_uL2_dom2"/>
</dbReference>
<dbReference type="InterPro" id="IPR020599">
    <property type="entry name" value="Transl_elong_fac_P/YeiP"/>
</dbReference>
<dbReference type="InterPro" id="IPR013185">
    <property type="entry name" value="Transl_elong_KOW-like"/>
</dbReference>
<dbReference type="InterPro" id="IPR001059">
    <property type="entry name" value="Transl_elong_P/YeiP_cen"/>
</dbReference>
<dbReference type="InterPro" id="IPR013852">
    <property type="entry name" value="Transl_elong_P/YeiP_CS"/>
</dbReference>
<dbReference type="InterPro" id="IPR011768">
    <property type="entry name" value="Transl_elongation_fac_P"/>
</dbReference>
<dbReference type="InterPro" id="IPR008991">
    <property type="entry name" value="Translation_prot_SH3-like_sf"/>
</dbReference>
<dbReference type="NCBIfam" id="TIGR00038">
    <property type="entry name" value="efp"/>
    <property type="match status" value="1"/>
</dbReference>
<dbReference type="NCBIfam" id="NF001810">
    <property type="entry name" value="PRK00529.1"/>
    <property type="match status" value="1"/>
</dbReference>
<dbReference type="PANTHER" id="PTHR30053">
    <property type="entry name" value="ELONGATION FACTOR P"/>
    <property type="match status" value="1"/>
</dbReference>
<dbReference type="PANTHER" id="PTHR30053:SF12">
    <property type="entry name" value="ELONGATION FACTOR P (EF-P) FAMILY PROTEIN"/>
    <property type="match status" value="1"/>
</dbReference>
<dbReference type="Pfam" id="PF01132">
    <property type="entry name" value="EFP"/>
    <property type="match status" value="1"/>
</dbReference>
<dbReference type="Pfam" id="PF08207">
    <property type="entry name" value="EFP_N"/>
    <property type="match status" value="1"/>
</dbReference>
<dbReference type="Pfam" id="PF09285">
    <property type="entry name" value="Elong-fact-P_C"/>
    <property type="match status" value="1"/>
</dbReference>
<dbReference type="PIRSF" id="PIRSF005901">
    <property type="entry name" value="EF-P"/>
    <property type="match status" value="1"/>
</dbReference>
<dbReference type="SMART" id="SM01185">
    <property type="entry name" value="EFP"/>
    <property type="match status" value="1"/>
</dbReference>
<dbReference type="SMART" id="SM00841">
    <property type="entry name" value="Elong-fact-P_C"/>
    <property type="match status" value="1"/>
</dbReference>
<dbReference type="SUPFAM" id="SSF50249">
    <property type="entry name" value="Nucleic acid-binding proteins"/>
    <property type="match status" value="2"/>
</dbReference>
<dbReference type="SUPFAM" id="SSF50104">
    <property type="entry name" value="Translation proteins SH3-like domain"/>
    <property type="match status" value="1"/>
</dbReference>
<dbReference type="PROSITE" id="PS01275">
    <property type="entry name" value="EFP"/>
    <property type="match status" value="1"/>
</dbReference>
<reference key="1">
    <citation type="journal article" date="1998" name="Science">
        <title>Complete genome sequence of Treponema pallidum, the syphilis spirochete.</title>
        <authorList>
            <person name="Fraser C.M."/>
            <person name="Norris S.J."/>
            <person name="Weinstock G.M."/>
            <person name="White O."/>
            <person name="Sutton G.G."/>
            <person name="Dodson R.J."/>
            <person name="Gwinn M.L."/>
            <person name="Hickey E.K."/>
            <person name="Clayton R.A."/>
            <person name="Ketchum K.A."/>
            <person name="Sodergren E."/>
            <person name="Hardham J.M."/>
            <person name="McLeod M.P."/>
            <person name="Salzberg S.L."/>
            <person name="Peterson J.D."/>
            <person name="Khalak H.G."/>
            <person name="Richardson D.L."/>
            <person name="Howell J.K."/>
            <person name="Chidambaram M."/>
            <person name="Utterback T.R."/>
            <person name="McDonald L.A."/>
            <person name="Artiach P."/>
            <person name="Bowman C."/>
            <person name="Cotton M.D."/>
            <person name="Fujii C."/>
            <person name="Garland S.A."/>
            <person name="Hatch B."/>
            <person name="Horst K."/>
            <person name="Roberts K.M."/>
            <person name="Sandusky M."/>
            <person name="Weidman J.F."/>
            <person name="Smith H.O."/>
            <person name="Venter J.C."/>
        </authorList>
    </citation>
    <scope>NUCLEOTIDE SEQUENCE [LARGE SCALE GENOMIC DNA]</scope>
    <source>
        <strain>Nichols</strain>
    </source>
</reference>
<evidence type="ECO:0000250" key="1"/>
<evidence type="ECO:0000305" key="2"/>
<protein>
    <recommendedName>
        <fullName>Elongation factor P</fullName>
        <shortName>EF-P</shortName>
    </recommendedName>
</protein>
<feature type="chain" id="PRO_0000094360" description="Elongation factor P">
    <location>
        <begin position="1"/>
        <end position="187"/>
    </location>
</feature>
<keyword id="KW-0963">Cytoplasm</keyword>
<keyword id="KW-0251">Elongation factor</keyword>
<keyword id="KW-0648">Protein biosynthesis</keyword>
<keyword id="KW-1185">Reference proteome</keyword>
<organism>
    <name type="scientific">Treponema pallidum (strain Nichols)</name>
    <dbReference type="NCBI Taxonomy" id="243276"/>
    <lineage>
        <taxon>Bacteria</taxon>
        <taxon>Pseudomonadati</taxon>
        <taxon>Spirochaetota</taxon>
        <taxon>Spirochaetia</taxon>
        <taxon>Spirochaetales</taxon>
        <taxon>Treponemataceae</taxon>
        <taxon>Treponema</taxon>
    </lineage>
</organism>
<name>EFP_TREPA</name>
<sequence>MIRGGDIAKGTVLLHKGAPYLVVEREFVNPGKGAAFARVKMKHLRDGSVLTQTVKTSDTVEDAVVDSHRAQYQYDDGECFVFMDTRSFEQIFVSKGNVPGRERYLREGDEYDILIWNGESIDIKIPTKMVFRVAHSEPYLKGDTVSGATKPVTTETGLVVRVPLFIKQGEKILINTETNEYQERVND</sequence>
<comment type="function">
    <text evidence="1">Involved in peptide bond synthesis. Stimulates efficient translation and peptide-bond synthesis on native or reconstituted 70S ribosomes in vitro. Probably functions indirectly by altering the affinity of the ribosome for aminoacyl-tRNA, thus increasing their reactivity as acceptors for peptidyl transferase (By similarity).</text>
</comment>
<comment type="pathway">
    <text>Protein biosynthesis; polypeptide chain elongation.</text>
</comment>
<comment type="subcellular location">
    <subcellularLocation>
        <location evidence="1">Cytoplasm</location>
    </subcellularLocation>
</comment>
<comment type="similarity">
    <text evidence="2">Belongs to the elongation factor P family.</text>
</comment>
<accession>O83537</accession>
<proteinExistence type="inferred from homology"/>